<name>MSRB_STAAE</name>
<feature type="chain" id="PRO_1000073496" description="Peptide methionine sulfoxide reductase MsrB">
    <location>
        <begin position="1"/>
        <end position="142"/>
    </location>
</feature>
<feature type="domain" description="MsrB" evidence="2">
    <location>
        <begin position="2"/>
        <end position="125"/>
    </location>
</feature>
<feature type="active site" description="Nucleophile" evidence="2">
    <location>
        <position position="114"/>
    </location>
</feature>
<evidence type="ECO:0000255" key="1">
    <source>
        <dbReference type="HAMAP-Rule" id="MF_01400"/>
    </source>
</evidence>
<evidence type="ECO:0000255" key="2">
    <source>
        <dbReference type="PROSITE-ProRule" id="PRU01126"/>
    </source>
</evidence>
<keyword id="KW-0560">Oxidoreductase</keyword>
<protein>
    <recommendedName>
        <fullName evidence="1">Peptide methionine sulfoxide reductase MsrB</fullName>
        <ecNumber evidence="1">1.8.4.12</ecNumber>
    </recommendedName>
    <alternativeName>
        <fullName evidence="1">Peptide-methionine (R)-S-oxide reductase</fullName>
    </alternativeName>
</protein>
<gene>
    <name evidence="1" type="primary">msrB</name>
    <name type="ordered locus">NWMN_1334</name>
</gene>
<dbReference type="EC" id="1.8.4.12" evidence="1"/>
<dbReference type="EMBL" id="AP009351">
    <property type="protein sequence ID" value="BAF67606.1"/>
    <property type="molecule type" value="Genomic_DNA"/>
</dbReference>
<dbReference type="RefSeq" id="WP_000913315.1">
    <property type="nucleotide sequence ID" value="NZ_JBBIAE010000001.1"/>
</dbReference>
<dbReference type="SMR" id="A6QGX4"/>
<dbReference type="KEGG" id="sae:NWMN_1334"/>
<dbReference type="HOGENOM" id="CLU_031040_8_5_9"/>
<dbReference type="Proteomes" id="UP000006386">
    <property type="component" value="Chromosome"/>
</dbReference>
<dbReference type="GO" id="GO:0005737">
    <property type="term" value="C:cytoplasm"/>
    <property type="evidence" value="ECO:0007669"/>
    <property type="project" value="TreeGrafter"/>
</dbReference>
<dbReference type="GO" id="GO:0033743">
    <property type="term" value="F:peptide-methionine (R)-S-oxide reductase activity"/>
    <property type="evidence" value="ECO:0007669"/>
    <property type="project" value="UniProtKB-UniRule"/>
</dbReference>
<dbReference type="GO" id="GO:0030091">
    <property type="term" value="P:protein repair"/>
    <property type="evidence" value="ECO:0007669"/>
    <property type="project" value="InterPro"/>
</dbReference>
<dbReference type="GO" id="GO:0006979">
    <property type="term" value="P:response to oxidative stress"/>
    <property type="evidence" value="ECO:0007669"/>
    <property type="project" value="InterPro"/>
</dbReference>
<dbReference type="FunFam" id="2.170.150.20:FF:000003">
    <property type="entry name" value="Peptide methionine sulfoxide reductase MsrB"/>
    <property type="match status" value="1"/>
</dbReference>
<dbReference type="Gene3D" id="2.170.150.20">
    <property type="entry name" value="Peptide methionine sulfoxide reductase"/>
    <property type="match status" value="1"/>
</dbReference>
<dbReference type="HAMAP" id="MF_01400">
    <property type="entry name" value="MsrB"/>
    <property type="match status" value="1"/>
</dbReference>
<dbReference type="InterPro" id="IPR028427">
    <property type="entry name" value="Met_Sox_Rdtase_MsrB"/>
</dbReference>
<dbReference type="InterPro" id="IPR002579">
    <property type="entry name" value="Met_Sox_Rdtase_MsrB_dom"/>
</dbReference>
<dbReference type="InterPro" id="IPR011057">
    <property type="entry name" value="Mss4-like_sf"/>
</dbReference>
<dbReference type="NCBIfam" id="TIGR00357">
    <property type="entry name" value="peptide-methionine (R)-S-oxide reductase MsrB"/>
    <property type="match status" value="1"/>
</dbReference>
<dbReference type="PANTHER" id="PTHR10173">
    <property type="entry name" value="METHIONINE SULFOXIDE REDUCTASE"/>
    <property type="match status" value="1"/>
</dbReference>
<dbReference type="PANTHER" id="PTHR10173:SF59">
    <property type="entry name" value="PEPTIDE METHIONINE SULFOXIDE REDUCTASE MSRA_MSRB"/>
    <property type="match status" value="1"/>
</dbReference>
<dbReference type="Pfam" id="PF01641">
    <property type="entry name" value="SelR"/>
    <property type="match status" value="1"/>
</dbReference>
<dbReference type="SUPFAM" id="SSF51316">
    <property type="entry name" value="Mss4-like"/>
    <property type="match status" value="1"/>
</dbReference>
<dbReference type="PROSITE" id="PS51790">
    <property type="entry name" value="MSRB"/>
    <property type="match status" value="1"/>
</dbReference>
<comment type="catalytic activity">
    <reaction evidence="1">
        <text>L-methionyl-[protein] + [thioredoxin]-disulfide + H2O = L-methionyl-(R)-S-oxide-[protein] + [thioredoxin]-dithiol</text>
        <dbReference type="Rhea" id="RHEA:24164"/>
        <dbReference type="Rhea" id="RHEA-COMP:10698"/>
        <dbReference type="Rhea" id="RHEA-COMP:10700"/>
        <dbReference type="Rhea" id="RHEA-COMP:12313"/>
        <dbReference type="Rhea" id="RHEA-COMP:12314"/>
        <dbReference type="ChEBI" id="CHEBI:15377"/>
        <dbReference type="ChEBI" id="CHEBI:16044"/>
        <dbReference type="ChEBI" id="CHEBI:29950"/>
        <dbReference type="ChEBI" id="CHEBI:45764"/>
        <dbReference type="ChEBI" id="CHEBI:50058"/>
        <dbReference type="EC" id="1.8.4.12"/>
    </reaction>
</comment>
<comment type="similarity">
    <text evidence="1">Belongs to the MsrB Met sulfoxide reductase family.</text>
</comment>
<sequence length="142" mass="16277">MLKKDKSELTDIEYIVTQENGTEPPFMNEYWNHFAKGIYVDKISGKPLFTSEEKFHSECGWPSFSKALDDDEIIELVDKSFGMLRTEVRSEESNSHLGHVFNDGPKESGGLRYCINSAAIQFIPYEKLEELGYGDLISHFDK</sequence>
<proteinExistence type="inferred from homology"/>
<reference key="1">
    <citation type="journal article" date="2008" name="J. Bacteriol.">
        <title>Genome sequence of Staphylococcus aureus strain Newman and comparative analysis of staphylococcal genomes: polymorphism and evolution of two major pathogenicity islands.</title>
        <authorList>
            <person name="Baba T."/>
            <person name="Bae T."/>
            <person name="Schneewind O."/>
            <person name="Takeuchi F."/>
            <person name="Hiramatsu K."/>
        </authorList>
    </citation>
    <scope>NUCLEOTIDE SEQUENCE [LARGE SCALE GENOMIC DNA]</scope>
    <source>
        <strain>Newman</strain>
    </source>
</reference>
<accession>A6QGX4</accession>
<organism>
    <name type="scientific">Staphylococcus aureus (strain Newman)</name>
    <dbReference type="NCBI Taxonomy" id="426430"/>
    <lineage>
        <taxon>Bacteria</taxon>
        <taxon>Bacillati</taxon>
        <taxon>Bacillota</taxon>
        <taxon>Bacilli</taxon>
        <taxon>Bacillales</taxon>
        <taxon>Staphylococcaceae</taxon>
        <taxon>Staphylococcus</taxon>
    </lineage>
</organism>